<feature type="chain" id="PRO_0000111578" description="Ribonuclease HII">
    <location>
        <begin position="1"/>
        <end position="197"/>
    </location>
</feature>
<feature type="domain" description="RNase H type-2" evidence="2">
    <location>
        <begin position="9"/>
        <end position="197"/>
    </location>
</feature>
<feature type="binding site" evidence="1">
    <location>
        <position position="15"/>
    </location>
    <ligand>
        <name>a divalent metal cation</name>
        <dbReference type="ChEBI" id="CHEBI:60240"/>
    </ligand>
</feature>
<feature type="binding site" evidence="1">
    <location>
        <position position="16"/>
    </location>
    <ligand>
        <name>a divalent metal cation</name>
        <dbReference type="ChEBI" id="CHEBI:60240"/>
    </ligand>
</feature>
<feature type="binding site" evidence="1">
    <location>
        <position position="107"/>
    </location>
    <ligand>
        <name>a divalent metal cation</name>
        <dbReference type="ChEBI" id="CHEBI:60240"/>
    </ligand>
</feature>
<feature type="sequence conflict" description="In Ref. 2; CAA60867." evidence="3" ref="2">
    <original>R</original>
    <variation>L</variation>
    <location>
        <position position="65"/>
    </location>
</feature>
<sequence>MFEYPQGYKLIAGVDEVGRGPLVGAVVTAAVILDPHNPIEGLADSKKLSEKKRLALAEEIKEKARAWALGRAEADEIDEINILQASLLAMTRAVKSLKIQPHFVLIDGNKIPKDLAIPAQAVVKGDSLVAEISAASILAKVARDQEMEELDKQYPEYAFAQHKGYPTKLHLEKLAELGALPQHRRSFAPVKKALEQF</sequence>
<dbReference type="EC" id="3.1.26.4"/>
<dbReference type="EMBL" id="L42023">
    <property type="protein sequence ID" value="AAC22714.1"/>
    <property type="molecule type" value="Genomic_DNA"/>
</dbReference>
<dbReference type="EMBL" id="X87416">
    <property type="protein sequence ID" value="CAA60867.1"/>
    <property type="molecule type" value="Genomic_DNA"/>
</dbReference>
<dbReference type="PIR" id="D64180">
    <property type="entry name" value="D64180"/>
</dbReference>
<dbReference type="RefSeq" id="NP_439217.1">
    <property type="nucleotide sequence ID" value="NC_000907.1"/>
</dbReference>
<dbReference type="SMR" id="P43808"/>
<dbReference type="STRING" id="71421.HI_1059"/>
<dbReference type="EnsemblBacteria" id="AAC22714">
    <property type="protein sequence ID" value="AAC22714"/>
    <property type="gene ID" value="HI_1059"/>
</dbReference>
<dbReference type="KEGG" id="hin:HI_1059"/>
<dbReference type="PATRIC" id="fig|71421.8.peg.1103"/>
<dbReference type="eggNOG" id="COG0164">
    <property type="taxonomic scope" value="Bacteria"/>
</dbReference>
<dbReference type="HOGENOM" id="CLU_036532_3_2_6"/>
<dbReference type="OrthoDB" id="9803420at2"/>
<dbReference type="PhylomeDB" id="P43808"/>
<dbReference type="BioCyc" id="HINF71421:G1GJ1-1096-MONOMER"/>
<dbReference type="Proteomes" id="UP000000579">
    <property type="component" value="Chromosome"/>
</dbReference>
<dbReference type="GO" id="GO:0005737">
    <property type="term" value="C:cytoplasm"/>
    <property type="evidence" value="ECO:0007669"/>
    <property type="project" value="UniProtKB-SubCell"/>
</dbReference>
<dbReference type="GO" id="GO:0032299">
    <property type="term" value="C:ribonuclease H2 complex"/>
    <property type="evidence" value="ECO:0000318"/>
    <property type="project" value="GO_Central"/>
</dbReference>
<dbReference type="GO" id="GO:0030145">
    <property type="term" value="F:manganese ion binding"/>
    <property type="evidence" value="ECO:0007669"/>
    <property type="project" value="UniProtKB-UniRule"/>
</dbReference>
<dbReference type="GO" id="GO:0003723">
    <property type="term" value="F:RNA binding"/>
    <property type="evidence" value="ECO:0007669"/>
    <property type="project" value="InterPro"/>
</dbReference>
<dbReference type="GO" id="GO:0004523">
    <property type="term" value="F:RNA-DNA hybrid ribonuclease activity"/>
    <property type="evidence" value="ECO:0000318"/>
    <property type="project" value="GO_Central"/>
</dbReference>
<dbReference type="GO" id="GO:0043137">
    <property type="term" value="P:DNA replication, removal of RNA primer"/>
    <property type="evidence" value="ECO:0000318"/>
    <property type="project" value="GO_Central"/>
</dbReference>
<dbReference type="GO" id="GO:0006298">
    <property type="term" value="P:mismatch repair"/>
    <property type="evidence" value="ECO:0000318"/>
    <property type="project" value="GO_Central"/>
</dbReference>
<dbReference type="CDD" id="cd07182">
    <property type="entry name" value="RNase_HII_bacteria_HII_like"/>
    <property type="match status" value="1"/>
</dbReference>
<dbReference type="FunFam" id="3.30.420.10:FF:000006">
    <property type="entry name" value="Ribonuclease HII"/>
    <property type="match status" value="1"/>
</dbReference>
<dbReference type="Gene3D" id="3.30.420.10">
    <property type="entry name" value="Ribonuclease H-like superfamily/Ribonuclease H"/>
    <property type="match status" value="1"/>
</dbReference>
<dbReference type="HAMAP" id="MF_00052_B">
    <property type="entry name" value="RNase_HII_B"/>
    <property type="match status" value="1"/>
</dbReference>
<dbReference type="InterPro" id="IPR022898">
    <property type="entry name" value="RNase_HII"/>
</dbReference>
<dbReference type="InterPro" id="IPR001352">
    <property type="entry name" value="RNase_HII/HIII"/>
</dbReference>
<dbReference type="InterPro" id="IPR024567">
    <property type="entry name" value="RNase_HII/HIII_dom"/>
</dbReference>
<dbReference type="InterPro" id="IPR012337">
    <property type="entry name" value="RNaseH-like_sf"/>
</dbReference>
<dbReference type="InterPro" id="IPR036397">
    <property type="entry name" value="RNaseH_sf"/>
</dbReference>
<dbReference type="NCBIfam" id="NF000594">
    <property type="entry name" value="PRK00015.1-1"/>
    <property type="match status" value="1"/>
</dbReference>
<dbReference type="NCBIfam" id="NF000595">
    <property type="entry name" value="PRK00015.1-3"/>
    <property type="match status" value="1"/>
</dbReference>
<dbReference type="NCBIfam" id="NF000596">
    <property type="entry name" value="PRK00015.1-4"/>
    <property type="match status" value="1"/>
</dbReference>
<dbReference type="PANTHER" id="PTHR10954">
    <property type="entry name" value="RIBONUCLEASE H2 SUBUNIT A"/>
    <property type="match status" value="1"/>
</dbReference>
<dbReference type="PANTHER" id="PTHR10954:SF18">
    <property type="entry name" value="RIBONUCLEASE HII"/>
    <property type="match status" value="1"/>
</dbReference>
<dbReference type="Pfam" id="PF01351">
    <property type="entry name" value="RNase_HII"/>
    <property type="match status" value="1"/>
</dbReference>
<dbReference type="SUPFAM" id="SSF53098">
    <property type="entry name" value="Ribonuclease H-like"/>
    <property type="match status" value="1"/>
</dbReference>
<dbReference type="PROSITE" id="PS51975">
    <property type="entry name" value="RNASE_H_2"/>
    <property type="match status" value="1"/>
</dbReference>
<evidence type="ECO:0000250" key="1"/>
<evidence type="ECO:0000255" key="2">
    <source>
        <dbReference type="PROSITE-ProRule" id="PRU01319"/>
    </source>
</evidence>
<evidence type="ECO:0000305" key="3"/>
<keyword id="KW-0963">Cytoplasm</keyword>
<keyword id="KW-0255">Endonuclease</keyword>
<keyword id="KW-0378">Hydrolase</keyword>
<keyword id="KW-0464">Manganese</keyword>
<keyword id="KW-0479">Metal-binding</keyword>
<keyword id="KW-0540">Nuclease</keyword>
<keyword id="KW-1185">Reference proteome</keyword>
<reference key="1">
    <citation type="journal article" date="1995" name="Science">
        <title>Whole-genome random sequencing and assembly of Haemophilus influenzae Rd.</title>
        <authorList>
            <person name="Fleischmann R.D."/>
            <person name="Adams M.D."/>
            <person name="White O."/>
            <person name="Clayton R.A."/>
            <person name="Kirkness E.F."/>
            <person name="Kerlavage A.R."/>
            <person name="Bult C.J."/>
            <person name="Tomb J.-F."/>
            <person name="Dougherty B.A."/>
            <person name="Merrick J.M."/>
            <person name="McKenney K."/>
            <person name="Sutton G.G."/>
            <person name="FitzHugh W."/>
            <person name="Fields C.A."/>
            <person name="Gocayne J.D."/>
            <person name="Scott J.D."/>
            <person name="Shirley R."/>
            <person name="Liu L.-I."/>
            <person name="Glodek A."/>
            <person name="Kelley J.M."/>
            <person name="Weidman J.F."/>
            <person name="Phillips C.A."/>
            <person name="Spriggs T."/>
            <person name="Hedblom E."/>
            <person name="Cotton M.D."/>
            <person name="Utterback T.R."/>
            <person name="Hanna M.C."/>
            <person name="Nguyen D.T."/>
            <person name="Saudek D.M."/>
            <person name="Brandon R.C."/>
            <person name="Fine L.D."/>
            <person name="Fritchman J.L."/>
            <person name="Fuhrmann J.L."/>
            <person name="Geoghagen N.S.M."/>
            <person name="Gnehm C.L."/>
            <person name="McDonald L.A."/>
            <person name="Small K.V."/>
            <person name="Fraser C.M."/>
            <person name="Smith H.O."/>
            <person name="Venter J.C."/>
        </authorList>
    </citation>
    <scope>NUCLEOTIDE SEQUENCE [LARGE SCALE GENOMIC DNA]</scope>
    <source>
        <strain>ATCC 51907 / DSM 11121 / KW20 / Rd</strain>
    </source>
</reference>
<reference key="2">
    <citation type="journal article" date="1996" name="Gene">
        <title>Cloning and expression of genes encoding lipid A biosynthesis from Haemophilus influenzae type b.</title>
        <authorList>
            <person name="Servos S."/>
            <person name="Khan S."/>
            <person name="Maskell D."/>
        </authorList>
    </citation>
    <scope>NUCLEOTIDE SEQUENCE [GENOMIC DNA] OF 1-97</scope>
    <source>
        <strain>RM 7004 / Serotype B</strain>
    </source>
</reference>
<name>RNH2_HAEIN</name>
<comment type="function">
    <text evidence="1">Endonuclease that specifically degrades the RNA of RNA-DNA hybrids.</text>
</comment>
<comment type="catalytic activity">
    <reaction>
        <text>Endonucleolytic cleavage to 5'-phosphomonoester.</text>
        <dbReference type="EC" id="3.1.26.4"/>
    </reaction>
</comment>
<comment type="cofactor">
    <cofactor evidence="1">
        <name>Mn(2+)</name>
        <dbReference type="ChEBI" id="CHEBI:29035"/>
    </cofactor>
    <cofactor evidence="1">
        <name>Mg(2+)</name>
        <dbReference type="ChEBI" id="CHEBI:18420"/>
    </cofactor>
    <text evidence="1">Manganese or magnesium. Binds 1 divalent metal ion per monomer in the absence of substrate. May bind a second metal ion after substrate binding.</text>
</comment>
<comment type="subcellular location">
    <subcellularLocation>
        <location evidence="3">Cytoplasm</location>
    </subcellularLocation>
</comment>
<comment type="similarity">
    <text evidence="3">Belongs to the RNase HII family.</text>
</comment>
<protein>
    <recommendedName>
        <fullName>Ribonuclease HII</fullName>
        <shortName>RNase HII</shortName>
        <ecNumber>3.1.26.4</ecNumber>
    </recommendedName>
</protein>
<accession>P43808</accession>
<accession>P94808</accession>
<organism>
    <name type="scientific">Haemophilus influenzae (strain ATCC 51907 / DSM 11121 / KW20 / Rd)</name>
    <dbReference type="NCBI Taxonomy" id="71421"/>
    <lineage>
        <taxon>Bacteria</taxon>
        <taxon>Pseudomonadati</taxon>
        <taxon>Pseudomonadota</taxon>
        <taxon>Gammaproteobacteria</taxon>
        <taxon>Pasteurellales</taxon>
        <taxon>Pasteurellaceae</taxon>
        <taxon>Haemophilus</taxon>
    </lineage>
</organism>
<gene>
    <name type="primary">rnhB</name>
    <name type="ordered locus">HI_1059</name>
</gene>
<proteinExistence type="inferred from homology"/>